<keyword id="KW-0963">Cytoplasm</keyword>
<keyword id="KW-0444">Lipid biosynthesis</keyword>
<keyword id="KW-0443">Lipid metabolism</keyword>
<keyword id="KW-0520">NAD</keyword>
<keyword id="KW-0521">NADP</keyword>
<keyword id="KW-0547">Nucleotide-binding</keyword>
<keyword id="KW-0560">Oxidoreductase</keyword>
<keyword id="KW-0594">Phospholipid biosynthesis</keyword>
<keyword id="KW-1208">Phospholipid metabolism</keyword>
<keyword id="KW-1185">Reference proteome</keyword>
<comment type="function">
    <text evidence="1">Catalyzes the reduction of the glycolytic intermediate dihydroxyacetone phosphate (DHAP) to sn-glycerol 3-phosphate (G3P), the key precursor for phospholipid synthesis.</text>
</comment>
<comment type="catalytic activity">
    <reaction evidence="1">
        <text>sn-glycerol 3-phosphate + NAD(+) = dihydroxyacetone phosphate + NADH + H(+)</text>
        <dbReference type="Rhea" id="RHEA:11092"/>
        <dbReference type="ChEBI" id="CHEBI:15378"/>
        <dbReference type="ChEBI" id="CHEBI:57540"/>
        <dbReference type="ChEBI" id="CHEBI:57597"/>
        <dbReference type="ChEBI" id="CHEBI:57642"/>
        <dbReference type="ChEBI" id="CHEBI:57945"/>
        <dbReference type="EC" id="1.1.1.94"/>
    </reaction>
    <physiologicalReaction direction="right-to-left" evidence="1">
        <dbReference type="Rhea" id="RHEA:11094"/>
    </physiologicalReaction>
</comment>
<comment type="catalytic activity">
    <reaction evidence="1">
        <text>sn-glycerol 3-phosphate + NADP(+) = dihydroxyacetone phosphate + NADPH + H(+)</text>
        <dbReference type="Rhea" id="RHEA:11096"/>
        <dbReference type="ChEBI" id="CHEBI:15378"/>
        <dbReference type="ChEBI" id="CHEBI:57597"/>
        <dbReference type="ChEBI" id="CHEBI:57642"/>
        <dbReference type="ChEBI" id="CHEBI:57783"/>
        <dbReference type="ChEBI" id="CHEBI:58349"/>
        <dbReference type="EC" id="1.1.1.94"/>
    </reaction>
    <physiologicalReaction direction="right-to-left" evidence="1">
        <dbReference type="Rhea" id="RHEA:11098"/>
    </physiologicalReaction>
</comment>
<comment type="pathway">
    <text evidence="1">Membrane lipid metabolism; glycerophospholipid metabolism.</text>
</comment>
<comment type="subcellular location">
    <subcellularLocation>
        <location evidence="1">Cytoplasm</location>
    </subcellularLocation>
</comment>
<comment type="similarity">
    <text evidence="1">Belongs to the NAD-dependent glycerol-3-phosphate dehydrogenase family.</text>
</comment>
<dbReference type="EC" id="1.1.1.94" evidence="1"/>
<dbReference type="EMBL" id="BA000021">
    <property type="protein sequence ID" value="BAC24685.1"/>
    <property type="molecule type" value="Genomic_DNA"/>
</dbReference>
<dbReference type="SMR" id="Q8D216"/>
<dbReference type="STRING" id="36870.gene:10369048"/>
<dbReference type="KEGG" id="wbr:gpsA"/>
<dbReference type="eggNOG" id="COG0240">
    <property type="taxonomic scope" value="Bacteria"/>
</dbReference>
<dbReference type="HOGENOM" id="CLU_033449_0_2_6"/>
<dbReference type="OrthoDB" id="9812273at2"/>
<dbReference type="UniPathway" id="UPA00940"/>
<dbReference type="Proteomes" id="UP000000562">
    <property type="component" value="Chromosome"/>
</dbReference>
<dbReference type="GO" id="GO:0005829">
    <property type="term" value="C:cytosol"/>
    <property type="evidence" value="ECO:0007669"/>
    <property type="project" value="TreeGrafter"/>
</dbReference>
<dbReference type="GO" id="GO:0047952">
    <property type="term" value="F:glycerol-3-phosphate dehydrogenase [NAD(P)+] activity"/>
    <property type="evidence" value="ECO:0007669"/>
    <property type="project" value="UniProtKB-UniRule"/>
</dbReference>
<dbReference type="GO" id="GO:0051287">
    <property type="term" value="F:NAD binding"/>
    <property type="evidence" value="ECO:0007669"/>
    <property type="project" value="InterPro"/>
</dbReference>
<dbReference type="GO" id="GO:0005975">
    <property type="term" value="P:carbohydrate metabolic process"/>
    <property type="evidence" value="ECO:0007669"/>
    <property type="project" value="InterPro"/>
</dbReference>
<dbReference type="GO" id="GO:0046167">
    <property type="term" value="P:glycerol-3-phosphate biosynthetic process"/>
    <property type="evidence" value="ECO:0007669"/>
    <property type="project" value="UniProtKB-UniRule"/>
</dbReference>
<dbReference type="GO" id="GO:0046168">
    <property type="term" value="P:glycerol-3-phosphate catabolic process"/>
    <property type="evidence" value="ECO:0007669"/>
    <property type="project" value="InterPro"/>
</dbReference>
<dbReference type="GO" id="GO:0046474">
    <property type="term" value="P:glycerophospholipid biosynthetic process"/>
    <property type="evidence" value="ECO:0007669"/>
    <property type="project" value="TreeGrafter"/>
</dbReference>
<dbReference type="FunFam" id="1.10.1040.10:FF:000001">
    <property type="entry name" value="Glycerol-3-phosphate dehydrogenase [NAD(P)+]"/>
    <property type="match status" value="1"/>
</dbReference>
<dbReference type="FunFam" id="3.40.50.720:FF:000019">
    <property type="entry name" value="Glycerol-3-phosphate dehydrogenase [NAD(P)+]"/>
    <property type="match status" value="1"/>
</dbReference>
<dbReference type="Gene3D" id="1.10.1040.10">
    <property type="entry name" value="N-(1-d-carboxylethyl)-l-norvaline Dehydrogenase, domain 2"/>
    <property type="match status" value="1"/>
</dbReference>
<dbReference type="Gene3D" id="3.40.50.720">
    <property type="entry name" value="NAD(P)-binding Rossmann-like Domain"/>
    <property type="match status" value="1"/>
</dbReference>
<dbReference type="HAMAP" id="MF_00394">
    <property type="entry name" value="NAD_Glyc3P_dehydrog"/>
    <property type="match status" value="1"/>
</dbReference>
<dbReference type="InterPro" id="IPR008927">
    <property type="entry name" value="6-PGluconate_DH-like_C_sf"/>
</dbReference>
<dbReference type="InterPro" id="IPR013328">
    <property type="entry name" value="6PGD_dom2"/>
</dbReference>
<dbReference type="InterPro" id="IPR006168">
    <property type="entry name" value="G3P_DH_NAD-dep"/>
</dbReference>
<dbReference type="InterPro" id="IPR006109">
    <property type="entry name" value="G3P_DH_NAD-dep_C"/>
</dbReference>
<dbReference type="InterPro" id="IPR011128">
    <property type="entry name" value="G3P_DH_NAD-dep_N"/>
</dbReference>
<dbReference type="InterPro" id="IPR036291">
    <property type="entry name" value="NAD(P)-bd_dom_sf"/>
</dbReference>
<dbReference type="NCBIfam" id="NF000940">
    <property type="entry name" value="PRK00094.1-2"/>
    <property type="match status" value="1"/>
</dbReference>
<dbReference type="NCBIfam" id="NF000942">
    <property type="entry name" value="PRK00094.1-4"/>
    <property type="match status" value="1"/>
</dbReference>
<dbReference type="PANTHER" id="PTHR11728">
    <property type="entry name" value="GLYCEROL-3-PHOSPHATE DEHYDROGENASE"/>
    <property type="match status" value="1"/>
</dbReference>
<dbReference type="PANTHER" id="PTHR11728:SF1">
    <property type="entry name" value="GLYCEROL-3-PHOSPHATE DEHYDROGENASE [NAD(+)] 2, CHLOROPLASTIC"/>
    <property type="match status" value="1"/>
</dbReference>
<dbReference type="Pfam" id="PF07479">
    <property type="entry name" value="NAD_Gly3P_dh_C"/>
    <property type="match status" value="1"/>
</dbReference>
<dbReference type="Pfam" id="PF01210">
    <property type="entry name" value="NAD_Gly3P_dh_N"/>
    <property type="match status" value="1"/>
</dbReference>
<dbReference type="PIRSF" id="PIRSF000114">
    <property type="entry name" value="Glycerol-3-P_dh"/>
    <property type="match status" value="1"/>
</dbReference>
<dbReference type="PRINTS" id="PR00077">
    <property type="entry name" value="GPDHDRGNASE"/>
</dbReference>
<dbReference type="SUPFAM" id="SSF48179">
    <property type="entry name" value="6-phosphogluconate dehydrogenase C-terminal domain-like"/>
    <property type="match status" value="1"/>
</dbReference>
<dbReference type="SUPFAM" id="SSF51735">
    <property type="entry name" value="NAD(P)-binding Rossmann-fold domains"/>
    <property type="match status" value="1"/>
</dbReference>
<dbReference type="PROSITE" id="PS00957">
    <property type="entry name" value="NAD_G3PDH"/>
    <property type="match status" value="1"/>
</dbReference>
<reference key="1">
    <citation type="journal article" date="2002" name="Nat. Genet.">
        <title>Genome sequence of the endocellular obligate symbiont of tsetse flies, Wigglesworthia glossinidia.</title>
        <authorList>
            <person name="Akman L."/>
            <person name="Yamashita A."/>
            <person name="Watanabe H."/>
            <person name="Oshima K."/>
            <person name="Shiba T."/>
            <person name="Hattori M."/>
            <person name="Aksoy S."/>
        </authorList>
    </citation>
    <scope>NUCLEOTIDE SEQUENCE [LARGE SCALE GENOMIC DNA]</scope>
</reference>
<accession>Q8D216</accession>
<proteinExistence type="inferred from homology"/>
<evidence type="ECO:0000255" key="1">
    <source>
        <dbReference type="HAMAP-Rule" id="MF_00394"/>
    </source>
</evidence>
<feature type="chain" id="PRO_0000138058" description="Glycerol-3-phosphate dehydrogenase [NAD(P)+]">
    <location>
        <begin position="1"/>
        <end position="329"/>
    </location>
</feature>
<feature type="active site" description="Proton acceptor" evidence="1">
    <location>
        <position position="192"/>
    </location>
</feature>
<feature type="binding site" evidence="1">
    <location>
        <position position="14"/>
    </location>
    <ligand>
        <name>NADPH</name>
        <dbReference type="ChEBI" id="CHEBI:57783"/>
    </ligand>
</feature>
<feature type="binding site" evidence="1">
    <location>
        <position position="34"/>
    </location>
    <ligand>
        <name>NADPH</name>
        <dbReference type="ChEBI" id="CHEBI:57783"/>
    </ligand>
</feature>
<feature type="binding site" evidence="1">
    <location>
        <position position="108"/>
    </location>
    <ligand>
        <name>NADPH</name>
        <dbReference type="ChEBI" id="CHEBI:57783"/>
    </ligand>
</feature>
<feature type="binding site" evidence="1">
    <location>
        <position position="108"/>
    </location>
    <ligand>
        <name>sn-glycerol 3-phosphate</name>
        <dbReference type="ChEBI" id="CHEBI:57597"/>
    </ligand>
</feature>
<feature type="binding site" evidence="1">
    <location>
        <position position="137"/>
    </location>
    <ligand>
        <name>sn-glycerol 3-phosphate</name>
        <dbReference type="ChEBI" id="CHEBI:57597"/>
    </ligand>
</feature>
<feature type="binding site" evidence="1">
    <location>
        <position position="139"/>
    </location>
    <ligand>
        <name>sn-glycerol 3-phosphate</name>
        <dbReference type="ChEBI" id="CHEBI:57597"/>
    </ligand>
</feature>
<feature type="binding site" evidence="1">
    <location>
        <position position="141"/>
    </location>
    <ligand>
        <name>NADPH</name>
        <dbReference type="ChEBI" id="CHEBI:57783"/>
    </ligand>
</feature>
<feature type="binding site" evidence="1">
    <location>
        <position position="192"/>
    </location>
    <ligand>
        <name>sn-glycerol 3-phosphate</name>
        <dbReference type="ChEBI" id="CHEBI:57597"/>
    </ligand>
</feature>
<feature type="binding site" evidence="1">
    <location>
        <position position="245"/>
    </location>
    <ligand>
        <name>sn-glycerol 3-phosphate</name>
        <dbReference type="ChEBI" id="CHEBI:57597"/>
    </ligand>
</feature>
<feature type="binding site" evidence="1">
    <location>
        <position position="255"/>
    </location>
    <ligand>
        <name>sn-glycerol 3-phosphate</name>
        <dbReference type="ChEBI" id="CHEBI:57597"/>
    </ligand>
</feature>
<feature type="binding site" evidence="1">
    <location>
        <position position="256"/>
    </location>
    <ligand>
        <name>NADPH</name>
        <dbReference type="ChEBI" id="CHEBI:57783"/>
    </ligand>
</feature>
<feature type="binding site" evidence="1">
    <location>
        <position position="256"/>
    </location>
    <ligand>
        <name>sn-glycerol 3-phosphate</name>
        <dbReference type="ChEBI" id="CHEBI:57597"/>
    </ligand>
</feature>
<feature type="binding site" evidence="1">
    <location>
        <position position="257"/>
    </location>
    <ligand>
        <name>sn-glycerol 3-phosphate</name>
        <dbReference type="ChEBI" id="CHEBI:57597"/>
    </ligand>
</feature>
<feature type="binding site" evidence="1">
    <location>
        <position position="280"/>
    </location>
    <ligand>
        <name>NADPH</name>
        <dbReference type="ChEBI" id="CHEBI:57783"/>
    </ligand>
</feature>
<feature type="binding site" evidence="1">
    <location>
        <position position="282"/>
    </location>
    <ligand>
        <name>NADPH</name>
        <dbReference type="ChEBI" id="CHEBI:57783"/>
    </ligand>
</feature>
<protein>
    <recommendedName>
        <fullName evidence="1">Glycerol-3-phosphate dehydrogenase [NAD(P)+]</fullName>
        <ecNumber evidence="1">1.1.1.94</ecNumber>
    </recommendedName>
    <alternativeName>
        <fullName evidence="1">NAD(P)(+)-dependent glycerol-3-phosphate dehydrogenase</fullName>
    </alternativeName>
    <alternativeName>
        <fullName evidence="1">NAD(P)H-dependent dihydroxyacetone-phosphate reductase</fullName>
    </alternativeName>
</protein>
<sequence length="329" mass="36507">MSNFSITVIGAGAYGTALAVSFSKKNRKVFLWGRNKKHMQSLKKDRCNKKFLPKINFPNDLKIEISLKKAIKYSNTIVIAVPSIGFKNILIKIQPFLNKNVFLICGTKGLEPRTGRLLQEVVYDILGRETCLSIISGPSFARYLAIGLPTSMVLANNCIKTCKFLANKLKNKFLNIYSISDLVGVQIGGVIKNVIAIASGMSDGIQMGPNAKTAIITYGLEEMYKLGKVMGANEYTFMGMSGVGDLVLTCTDDESRNRKFGILLAQGYSIENAKSKVGCIIEGYNNIKEILILSCKHKINMPIIKQVYKILYMHQPVKKSILNIFLNKK</sequence>
<organism>
    <name type="scientific">Wigglesworthia glossinidia brevipalpis</name>
    <dbReference type="NCBI Taxonomy" id="36870"/>
    <lineage>
        <taxon>Bacteria</taxon>
        <taxon>Pseudomonadati</taxon>
        <taxon>Pseudomonadota</taxon>
        <taxon>Gammaproteobacteria</taxon>
        <taxon>Enterobacterales</taxon>
        <taxon>Erwiniaceae</taxon>
        <taxon>Wigglesworthia</taxon>
    </lineage>
</organism>
<gene>
    <name evidence="1" type="primary">gpsA</name>
    <name type="ordered locus">WIGBR5390</name>
</gene>
<name>GPDA_WIGBR</name>